<reference key="1">
    <citation type="journal article" date="1990" name="Eur. J. Biochem.">
        <title>Primary structure of the oligo-1,6-glucosidase of Bacillus cereus ATCC7064 deduced from the nucleotide sequence of the cloned gene.</title>
        <authorList>
            <person name="Watanabe K."/>
            <person name="Kitamura K."/>
            <person name="Iha H."/>
            <person name="Suzuki Y."/>
        </authorList>
    </citation>
    <scope>NUCLEOTIDE SEQUENCE [GENOMIC DNA]</scope>
    <scope>PROTEIN SEQUENCE OF 1-10</scope>
    <source>
        <strain>ATCC 7064 / NRS 201</strain>
    </source>
</reference>
<reference key="2">
    <citation type="journal article" date="1993" name="J. Biochem.">
        <title>Polypeptide folding of Bacillus cereus ATCC7064 oligo-1,6-glucosidase revealed by 3.0-A resolution X-ray analysis.</title>
        <authorList>
            <person name="Kizaki H."/>
            <person name="Hata Y."/>
            <person name="Watanabe K."/>
            <person name="Katsube Y."/>
            <person name="Suzuki Y."/>
        </authorList>
    </citation>
    <scope>X-RAY CRYSTALLOGRAPHY (3.0 ANGSTROMS)</scope>
    <source>
        <strain>ATCC 7064 / NRS 201</strain>
    </source>
</reference>
<reference key="3">
    <citation type="journal article" date="1997" name="J. Mol. Biol.">
        <title>The refined crystal structure of Bacillus cereus oligo-1,6-glucosidase at 2.0-A resolution: structural characterization of proline-substitution sites for protein thermostabilization.</title>
        <authorList>
            <person name="Watanabe K."/>
            <person name="Hata Y."/>
            <person name="Kizaki H."/>
            <person name="Katsube Y."/>
            <person name="Suzuki Y."/>
        </authorList>
    </citation>
    <scope>X-RAY CRYSTALLOGRAPHY (2.0 ANGSTROMS)</scope>
    <source>
        <strain>ATCC 7064 / NRS 201</strain>
    </source>
</reference>
<feature type="chain" id="PRO_0000054313" description="Oligo-1,6-glucosidase">
    <location>
        <begin position="1"/>
        <end position="558"/>
    </location>
</feature>
<feature type="active site" description="Nucleophile" evidence="1">
    <location>
        <position position="199"/>
    </location>
</feature>
<feature type="active site" description="Proton donor" evidence="1">
    <location>
        <position position="255"/>
    </location>
</feature>
<feature type="binding site" evidence="2">
    <location>
        <position position="21"/>
    </location>
    <ligand>
        <name>Ca(2+)</name>
        <dbReference type="ChEBI" id="CHEBI:29108"/>
    </ligand>
</feature>
<feature type="binding site" evidence="2">
    <location>
        <position position="23"/>
    </location>
    <ligand>
        <name>Ca(2+)</name>
        <dbReference type="ChEBI" id="CHEBI:29108"/>
    </ligand>
</feature>
<feature type="binding site" evidence="2">
    <location>
        <position position="25"/>
    </location>
    <ligand>
        <name>Ca(2+)</name>
        <dbReference type="ChEBI" id="CHEBI:29108"/>
    </ligand>
</feature>
<feature type="binding site" evidence="2">
    <location>
        <position position="29"/>
    </location>
    <ligand>
        <name>Ca(2+)</name>
        <dbReference type="ChEBI" id="CHEBI:29108"/>
    </ligand>
</feature>
<feature type="site" description="Transition state stabilizer" evidence="1">
    <location>
        <position position="329"/>
    </location>
</feature>
<feature type="helix" evidence="4">
    <location>
        <begin position="5"/>
        <end position="8"/>
    </location>
</feature>
<feature type="strand" evidence="4">
    <location>
        <begin position="11"/>
        <end position="14"/>
    </location>
</feature>
<feature type="helix" evidence="4">
    <location>
        <begin position="16"/>
        <end position="18"/>
    </location>
</feature>
<feature type="strand" evidence="4">
    <location>
        <begin position="22"/>
        <end position="27"/>
    </location>
</feature>
<feature type="helix" evidence="4">
    <location>
        <begin position="30"/>
        <end position="34"/>
    </location>
</feature>
<feature type="helix" evidence="4">
    <location>
        <begin position="37"/>
        <end position="43"/>
    </location>
</feature>
<feature type="strand" evidence="4">
    <location>
        <begin position="47"/>
        <end position="50"/>
    </location>
</feature>
<feature type="turn" evidence="4">
    <location>
        <begin position="59"/>
        <end position="62"/>
    </location>
</feature>
<feature type="strand" evidence="4">
    <location>
        <begin position="66"/>
        <end position="71"/>
    </location>
</feature>
<feature type="helix" evidence="4">
    <location>
        <begin position="73"/>
        <end position="75"/>
    </location>
</feature>
<feature type="helix" evidence="4">
    <location>
        <begin position="78"/>
        <end position="90"/>
    </location>
</feature>
<feature type="strand" evidence="4">
    <location>
        <begin position="94"/>
        <end position="99"/>
    </location>
</feature>
<feature type="helix" evidence="4">
    <location>
        <begin position="109"/>
        <end position="114"/>
    </location>
</feature>
<feature type="helix" evidence="4">
    <location>
        <begin position="123"/>
        <end position="125"/>
    </location>
</feature>
<feature type="strand" evidence="4">
    <location>
        <begin position="132"/>
        <end position="135"/>
    </location>
</feature>
<feature type="strand" evidence="4">
    <location>
        <begin position="145"/>
        <end position="152"/>
    </location>
</feature>
<feature type="turn" evidence="4">
    <location>
        <begin position="153"/>
        <end position="156"/>
    </location>
</feature>
<feature type="strand" evidence="4">
    <location>
        <begin position="157"/>
        <end position="160"/>
    </location>
</feature>
<feature type="helix" evidence="4">
    <location>
        <begin position="175"/>
        <end position="190"/>
    </location>
</feature>
<feature type="strand" evidence="4">
    <location>
        <begin position="195"/>
        <end position="198"/>
    </location>
</feature>
<feature type="helix" evidence="4">
    <location>
        <begin position="201"/>
        <end position="203"/>
    </location>
</feature>
<feature type="helix" evidence="4">
    <location>
        <begin position="224"/>
        <end position="226"/>
    </location>
</feature>
<feature type="turn" evidence="4">
    <location>
        <begin position="227"/>
        <end position="229"/>
    </location>
</feature>
<feature type="helix" evidence="4">
    <location>
        <begin position="233"/>
        <end position="243"/>
    </location>
</feature>
<feature type="helix" evidence="4">
    <location>
        <begin position="245"/>
        <end position="247"/>
    </location>
</feature>
<feature type="strand" evidence="4">
    <location>
        <begin position="251"/>
        <end position="255"/>
    </location>
</feature>
<feature type="helix" evidence="4">
    <location>
        <begin position="261"/>
        <end position="268"/>
    </location>
</feature>
<feature type="helix" evidence="4">
    <location>
        <begin position="270"/>
        <end position="272"/>
    </location>
</feature>
<feature type="helix" evidence="4">
    <location>
        <begin position="282"/>
        <end position="284"/>
    </location>
</feature>
<feature type="strand" evidence="4">
    <location>
        <begin position="292"/>
        <end position="296"/>
    </location>
</feature>
<feature type="helix" evidence="4">
    <location>
        <begin position="301"/>
        <end position="314"/>
    </location>
</feature>
<feature type="strand" evidence="4">
    <location>
        <begin position="316"/>
        <end position="319"/>
    </location>
</feature>
<feature type="helix" evidence="4">
    <location>
        <begin position="333"/>
        <end position="336"/>
    </location>
</feature>
<feature type="helix" evidence="4">
    <location>
        <begin position="344"/>
        <end position="356"/>
    </location>
</feature>
<feature type="strand" evidence="4">
    <location>
        <begin position="358"/>
        <end position="365"/>
    </location>
</feature>
<feature type="helix" evidence="4">
    <location>
        <begin position="368"/>
        <end position="370"/>
    </location>
</feature>
<feature type="helix" evidence="4">
    <location>
        <begin position="380"/>
        <end position="382"/>
    </location>
</feature>
<feature type="helix" evidence="4">
    <location>
        <begin position="386"/>
        <end position="397"/>
    </location>
</feature>
<feature type="helix" evidence="4">
    <location>
        <begin position="403"/>
        <end position="413"/>
    </location>
</feature>
<feature type="helix" evidence="4">
    <location>
        <begin position="415"/>
        <end position="418"/>
    </location>
</feature>
<feature type="turn" evidence="4">
    <location>
        <begin position="428"/>
        <end position="431"/>
    </location>
</feature>
<feature type="helix" evidence="4">
    <location>
        <begin position="443"/>
        <end position="446"/>
    </location>
</feature>
<feature type="helix" evidence="4">
    <location>
        <begin position="450"/>
        <end position="455"/>
    </location>
</feature>
<feature type="helix" evidence="4">
    <location>
        <begin position="460"/>
        <end position="473"/>
    </location>
</feature>
<feature type="helix" evidence="4">
    <location>
        <begin position="475"/>
        <end position="479"/>
    </location>
</feature>
<feature type="strand" evidence="4">
    <location>
        <begin position="481"/>
        <end position="486"/>
    </location>
</feature>
<feature type="strand" evidence="4">
    <location>
        <begin position="490"/>
        <end position="499"/>
    </location>
</feature>
<feature type="strand" evidence="4">
    <location>
        <begin position="502"/>
        <end position="509"/>
    </location>
</feature>
<feature type="strand" evidence="4">
    <location>
        <begin position="511"/>
        <end position="513"/>
    </location>
</feature>
<feature type="strand" evidence="4">
    <location>
        <begin position="515"/>
        <end position="518"/>
    </location>
</feature>
<feature type="strand" evidence="4">
    <location>
        <begin position="528"/>
        <end position="535"/>
    </location>
</feature>
<feature type="strand" evidence="4">
    <location>
        <begin position="543"/>
        <end position="547"/>
    </location>
</feature>
<feature type="strand" evidence="4">
    <location>
        <begin position="552"/>
        <end position="557"/>
    </location>
</feature>
<proteinExistence type="evidence at protein level"/>
<protein>
    <recommendedName>
        <fullName>Oligo-1,6-glucosidase</fullName>
        <ecNumber>3.2.1.10</ecNumber>
    </recommendedName>
    <alternativeName>
        <fullName>Dextrin 6-alpha-D-glucanohydrolase</fullName>
    </alternativeName>
    <alternativeName>
        <fullName>Oligosaccharide alpha-1,6-glucosidase</fullName>
    </alternativeName>
    <alternativeName>
        <fullName>Sucrase-isomaltase</fullName>
        <shortName>Isomaltase</shortName>
    </alternativeName>
</protein>
<accession>P21332</accession>
<keyword id="KW-0002">3D-structure</keyword>
<keyword id="KW-0106">Calcium</keyword>
<keyword id="KW-0963">Cytoplasm</keyword>
<keyword id="KW-0903">Direct protein sequencing</keyword>
<keyword id="KW-0326">Glycosidase</keyword>
<keyword id="KW-0378">Hydrolase</keyword>
<keyword id="KW-0479">Metal-binding</keyword>
<evidence type="ECO:0000250" key="1"/>
<evidence type="ECO:0000250" key="2">
    <source>
        <dbReference type="UniProtKB" id="O06994"/>
    </source>
</evidence>
<evidence type="ECO:0000305" key="3"/>
<evidence type="ECO:0007829" key="4">
    <source>
        <dbReference type="PDB" id="1UOK"/>
    </source>
</evidence>
<comment type="catalytic activity">
    <reaction>
        <text>Hydrolysis of (1-&gt;6)-alpha-D-glucosidic linkages in some oligosaccharides produced from starch and glycogen by alpha-amylase, and in isomaltose.</text>
        <dbReference type="EC" id="3.2.1.10"/>
    </reaction>
</comment>
<comment type="subcellular location">
    <subcellularLocation>
        <location>Cytoplasm</location>
    </subcellularLocation>
</comment>
<comment type="similarity">
    <text evidence="3">Belongs to the glycosyl hydrolase 13 family.</text>
</comment>
<sequence>MEKQWWKESVVYQIYPRSFMDSNGDGIGDLRGIISKLDYLKELGIDVIWLSPVYESPNDDNGYDISDYCKIMNEFGTMEDWDELLHEMHERNMKLMMDLVVNHTSDEHNWFIESRKSKDNKYRDYYIWRPGKEGKEPNNWGAAFSGSAWQYDEMTDEYYLHLFSKKQPDLNWDNEKVRQDVYEMMKFWLEKGIDGFRMDVINFISKEEGLPTVETEEEGYVSGHKHFMNGPNIHKYLHEMNEEVLSHYDIMTVGEMPGVTTEEAKLYTGEERKELQMVFQFEHMDLDSGEGGKWDVKPCSLLTLKENLTKWQKALEHTGWNSLYWNNHDQPRVVSRFGNDGMYRIESAKMLATVLHMMKGTPYIYQGEEIGMTNVRFESIDEYRDIETLNMYKEKVMERGEDIEKVMQSIYIKGRDNARTPMQWDDQNHAGFTTGEPWITVNPNYKEINVKQAIQNKDSIFYYYKKLIELRKNNEIVVYGSYDLILENNPSIFAYVRTYGVEKLLVIANFTAEECIFELPEDISYSEVELLIHNYDVENGPIENITLRPYEAMVFKLK</sequence>
<name>O16G_BACCE</name>
<dbReference type="EC" id="3.2.1.10"/>
<dbReference type="EMBL" id="X53507">
    <property type="protein sequence ID" value="CAA37583.1"/>
    <property type="molecule type" value="Genomic_DNA"/>
</dbReference>
<dbReference type="PIR" id="S13579">
    <property type="entry name" value="S13579"/>
</dbReference>
<dbReference type="RefSeq" id="WP_000415199.1">
    <property type="nucleotide sequence ID" value="NZ_PHKO01000002.1"/>
</dbReference>
<dbReference type="PDB" id="1UOK">
    <property type="method" value="X-ray"/>
    <property type="resolution" value="2.00 A"/>
    <property type="chains" value="A=1-558"/>
</dbReference>
<dbReference type="PDBsum" id="1UOK"/>
<dbReference type="SMR" id="P21332"/>
<dbReference type="CAZy" id="GH13">
    <property type="family name" value="Glycoside Hydrolase Family 13"/>
</dbReference>
<dbReference type="eggNOG" id="COG0366">
    <property type="taxonomic scope" value="Bacteria"/>
</dbReference>
<dbReference type="SABIO-RK" id="P21332"/>
<dbReference type="EvolutionaryTrace" id="P21332"/>
<dbReference type="GO" id="GO:0005737">
    <property type="term" value="C:cytoplasm"/>
    <property type="evidence" value="ECO:0007669"/>
    <property type="project" value="UniProtKB-SubCell"/>
</dbReference>
<dbReference type="GO" id="GO:0004556">
    <property type="term" value="F:alpha-amylase activity"/>
    <property type="evidence" value="ECO:0007669"/>
    <property type="project" value="TreeGrafter"/>
</dbReference>
<dbReference type="GO" id="GO:0046872">
    <property type="term" value="F:metal ion binding"/>
    <property type="evidence" value="ECO:0007669"/>
    <property type="project" value="UniProtKB-KW"/>
</dbReference>
<dbReference type="GO" id="GO:0004574">
    <property type="term" value="F:oligo-1,6-glucosidase activity"/>
    <property type="evidence" value="ECO:0007669"/>
    <property type="project" value="UniProtKB-EC"/>
</dbReference>
<dbReference type="GO" id="GO:0009313">
    <property type="term" value="P:oligosaccharide catabolic process"/>
    <property type="evidence" value="ECO:0007669"/>
    <property type="project" value="TreeGrafter"/>
</dbReference>
<dbReference type="CDD" id="cd11333">
    <property type="entry name" value="AmyAc_SI_OligoGlu_DGase"/>
    <property type="match status" value="1"/>
</dbReference>
<dbReference type="FunFam" id="3.20.20.80:FF:000014">
    <property type="entry name" value="Alpha,alpha-phosphotrehalase"/>
    <property type="match status" value="1"/>
</dbReference>
<dbReference type="FunFam" id="3.20.20.80:FF:000064">
    <property type="entry name" value="Oligo-1,6-glucosidase"/>
    <property type="match status" value="1"/>
</dbReference>
<dbReference type="FunFam" id="2.60.40.1180:FF:000007">
    <property type="entry name" value="Sucrose isomerase"/>
    <property type="match status" value="1"/>
</dbReference>
<dbReference type="FunFam" id="3.90.400.10:FF:000002">
    <property type="entry name" value="Sucrose isomerase"/>
    <property type="match status" value="1"/>
</dbReference>
<dbReference type="Gene3D" id="3.20.20.80">
    <property type="entry name" value="Glycosidases"/>
    <property type="match status" value="1"/>
</dbReference>
<dbReference type="Gene3D" id="2.60.40.1180">
    <property type="entry name" value="Golgi alpha-mannosidase II"/>
    <property type="match status" value="1"/>
</dbReference>
<dbReference type="Gene3D" id="3.90.400.10">
    <property type="entry name" value="Oligo-1,6-glucosidase, Domain 2"/>
    <property type="match status" value="1"/>
</dbReference>
<dbReference type="InterPro" id="IPR006047">
    <property type="entry name" value="Glyco_hydro_13_cat_dom"/>
</dbReference>
<dbReference type="InterPro" id="IPR013780">
    <property type="entry name" value="Glyco_hydro_b"/>
</dbReference>
<dbReference type="InterPro" id="IPR017853">
    <property type="entry name" value="Glycoside_hydrolase_SF"/>
</dbReference>
<dbReference type="InterPro" id="IPR045857">
    <property type="entry name" value="O16G_dom_2"/>
</dbReference>
<dbReference type="InterPro" id="IPR056300">
    <property type="entry name" value="SusG-like_C"/>
</dbReference>
<dbReference type="NCBIfam" id="NF008183">
    <property type="entry name" value="PRK10933.1"/>
    <property type="match status" value="1"/>
</dbReference>
<dbReference type="PANTHER" id="PTHR10357">
    <property type="entry name" value="ALPHA-AMYLASE FAMILY MEMBER"/>
    <property type="match status" value="1"/>
</dbReference>
<dbReference type="PANTHER" id="PTHR10357:SF184">
    <property type="entry name" value="OLIGO-1,6-GLUCOSIDASE 1"/>
    <property type="match status" value="1"/>
</dbReference>
<dbReference type="Pfam" id="PF00128">
    <property type="entry name" value="Alpha-amylase"/>
    <property type="match status" value="1"/>
</dbReference>
<dbReference type="Pfam" id="PF23915">
    <property type="entry name" value="SusG_C"/>
    <property type="match status" value="1"/>
</dbReference>
<dbReference type="SMART" id="SM00642">
    <property type="entry name" value="Aamy"/>
    <property type="match status" value="1"/>
</dbReference>
<dbReference type="SUPFAM" id="SSF51445">
    <property type="entry name" value="(Trans)glycosidases"/>
    <property type="match status" value="1"/>
</dbReference>
<dbReference type="SUPFAM" id="SSF51011">
    <property type="entry name" value="Glycosyl hydrolase domain"/>
    <property type="match status" value="1"/>
</dbReference>
<organism>
    <name type="scientific">Bacillus cereus</name>
    <dbReference type="NCBI Taxonomy" id="1396"/>
    <lineage>
        <taxon>Bacteria</taxon>
        <taxon>Bacillati</taxon>
        <taxon>Bacillota</taxon>
        <taxon>Bacilli</taxon>
        <taxon>Bacillales</taxon>
        <taxon>Bacillaceae</taxon>
        <taxon>Bacillus</taxon>
        <taxon>Bacillus cereus group</taxon>
    </lineage>
</organism>
<gene>
    <name type="primary">malL</name>
</gene>